<comment type="function">
    <text evidence="1">Probably mediates the hydrolysis of some nucleoside diphosphate derivatives.</text>
</comment>
<comment type="cofactor">
    <cofactor evidence="1">
        <name>Mn(2+)</name>
        <dbReference type="ChEBI" id="CHEBI:29035"/>
    </cofactor>
    <cofactor evidence="1">
        <name>Mg(2+)</name>
        <dbReference type="ChEBI" id="CHEBI:18420"/>
    </cofactor>
</comment>
<comment type="similarity">
    <text evidence="1">Belongs to the Nudix hydrolase family. PCD1 subfamily.</text>
</comment>
<evidence type="ECO:0000255" key="1">
    <source>
        <dbReference type="HAMAP-Rule" id="MF_01592"/>
    </source>
</evidence>
<keyword id="KW-0378">Hydrolase</keyword>
<keyword id="KW-0460">Magnesium</keyword>
<keyword id="KW-0464">Manganese</keyword>
<keyword id="KW-0479">Metal-binding</keyword>
<feature type="chain" id="PRO_1000147816" description="Uncharacterized Nudix hydrolase NudL">
    <location>
        <begin position="1"/>
        <end position="192"/>
    </location>
</feature>
<feature type="domain" description="Nudix hydrolase" evidence="1">
    <location>
        <begin position="29"/>
        <end position="160"/>
    </location>
</feature>
<feature type="short sequence motif" description="Nudix box">
    <location>
        <begin position="67"/>
        <end position="89"/>
    </location>
</feature>
<feature type="binding site" evidence="1">
    <location>
        <position position="83"/>
    </location>
    <ligand>
        <name>Mg(2+)</name>
        <dbReference type="ChEBI" id="CHEBI:18420"/>
    </ligand>
</feature>
<feature type="binding site" evidence="1">
    <location>
        <position position="87"/>
    </location>
    <ligand>
        <name>Mg(2+)</name>
        <dbReference type="ChEBI" id="CHEBI:18420"/>
    </ligand>
</feature>
<accession>B1XH80</accession>
<organism>
    <name type="scientific">Escherichia coli (strain K12 / DH10B)</name>
    <dbReference type="NCBI Taxonomy" id="316385"/>
    <lineage>
        <taxon>Bacteria</taxon>
        <taxon>Pseudomonadati</taxon>
        <taxon>Pseudomonadota</taxon>
        <taxon>Gammaproteobacteria</taxon>
        <taxon>Enterobacterales</taxon>
        <taxon>Enterobacteriaceae</taxon>
        <taxon>Escherichia</taxon>
    </lineage>
</organism>
<dbReference type="EC" id="3.6.1.-" evidence="1"/>
<dbReference type="EMBL" id="CP000948">
    <property type="protein sequence ID" value="ACB03010.1"/>
    <property type="molecule type" value="Genomic_DNA"/>
</dbReference>
<dbReference type="RefSeq" id="WP_000456715.1">
    <property type="nucleotide sequence ID" value="NC_010473.1"/>
</dbReference>
<dbReference type="SMR" id="B1XH80"/>
<dbReference type="KEGG" id="ecd:ECDH10B_1951"/>
<dbReference type="HOGENOM" id="CLU_040940_5_2_6"/>
<dbReference type="GO" id="GO:0010945">
    <property type="term" value="F:coenzyme A diphosphatase activity"/>
    <property type="evidence" value="ECO:0007669"/>
    <property type="project" value="InterPro"/>
</dbReference>
<dbReference type="GO" id="GO:0000287">
    <property type="term" value="F:magnesium ion binding"/>
    <property type="evidence" value="ECO:0007669"/>
    <property type="project" value="UniProtKB-UniRule"/>
</dbReference>
<dbReference type="GO" id="GO:0030145">
    <property type="term" value="F:manganese ion binding"/>
    <property type="evidence" value="ECO:0007669"/>
    <property type="project" value="UniProtKB-UniRule"/>
</dbReference>
<dbReference type="GO" id="GO:0009132">
    <property type="term" value="P:nucleoside diphosphate metabolic process"/>
    <property type="evidence" value="ECO:0007669"/>
    <property type="project" value="InterPro"/>
</dbReference>
<dbReference type="CDD" id="cd03426">
    <property type="entry name" value="NUDIX_CoAse_Nudt7"/>
    <property type="match status" value="1"/>
</dbReference>
<dbReference type="FunFam" id="3.90.79.10:FF:000013">
    <property type="entry name" value="Uncharacterized Nudix hydrolase NudL"/>
    <property type="match status" value="1"/>
</dbReference>
<dbReference type="Gene3D" id="3.90.79.10">
    <property type="entry name" value="Nucleoside Triphosphate Pyrophosphohydrolase"/>
    <property type="match status" value="1"/>
</dbReference>
<dbReference type="HAMAP" id="MF_01592">
    <property type="entry name" value="Nudix_NudL"/>
    <property type="match status" value="1"/>
</dbReference>
<dbReference type="InterPro" id="IPR045121">
    <property type="entry name" value="CoAse"/>
</dbReference>
<dbReference type="InterPro" id="IPR015797">
    <property type="entry name" value="NUDIX_hydrolase-like_dom_sf"/>
</dbReference>
<dbReference type="InterPro" id="IPR000086">
    <property type="entry name" value="NUDIX_hydrolase_dom"/>
</dbReference>
<dbReference type="InterPro" id="IPR000059">
    <property type="entry name" value="NUDIX_hydrolase_NudL_CS"/>
</dbReference>
<dbReference type="InterPro" id="IPR023735">
    <property type="entry name" value="Nudix_NudL"/>
</dbReference>
<dbReference type="NCBIfam" id="NF007980">
    <property type="entry name" value="PRK10707.1"/>
    <property type="match status" value="1"/>
</dbReference>
<dbReference type="PANTHER" id="PTHR12992:SF11">
    <property type="entry name" value="MITOCHONDRIAL COENZYME A DIPHOSPHATASE NUDT8"/>
    <property type="match status" value="1"/>
</dbReference>
<dbReference type="PANTHER" id="PTHR12992">
    <property type="entry name" value="NUDIX HYDROLASE"/>
    <property type="match status" value="1"/>
</dbReference>
<dbReference type="Pfam" id="PF00293">
    <property type="entry name" value="NUDIX"/>
    <property type="match status" value="1"/>
</dbReference>
<dbReference type="SUPFAM" id="SSF55811">
    <property type="entry name" value="Nudix"/>
    <property type="match status" value="1"/>
</dbReference>
<dbReference type="PROSITE" id="PS51462">
    <property type="entry name" value="NUDIX"/>
    <property type="match status" value="1"/>
</dbReference>
<dbReference type="PROSITE" id="PS01293">
    <property type="entry name" value="NUDIX_COA"/>
    <property type="match status" value="1"/>
</dbReference>
<sequence>MEYRSLTLDDFLSRFQLLRPQINRETLNHRQAAVLIPIVRRPQPGLLLTQRSIHLRKHAGQVAFPGGAVDDTDASAIAAALREAEEEVAIPPSAVEVIGVLPPVDSVTGYQVTPVVGIIPPDLPYRASEDEVSAVFEMPLAQALHLGRYHPLDIYRRGDSHRVWLSWYEQYFVWGMTAGIIRELALQIGVKP</sequence>
<protein>
    <recommendedName>
        <fullName evidence="1">Uncharacterized Nudix hydrolase NudL</fullName>
        <ecNumber evidence="1">3.6.1.-</ecNumber>
    </recommendedName>
</protein>
<reference key="1">
    <citation type="journal article" date="2008" name="J. Bacteriol.">
        <title>The complete genome sequence of Escherichia coli DH10B: insights into the biology of a laboratory workhorse.</title>
        <authorList>
            <person name="Durfee T."/>
            <person name="Nelson R."/>
            <person name="Baldwin S."/>
            <person name="Plunkett G. III"/>
            <person name="Burland V."/>
            <person name="Mau B."/>
            <person name="Petrosino J.F."/>
            <person name="Qin X."/>
            <person name="Muzny D.M."/>
            <person name="Ayele M."/>
            <person name="Gibbs R.A."/>
            <person name="Csorgo B."/>
            <person name="Posfai G."/>
            <person name="Weinstock G.M."/>
            <person name="Blattner F.R."/>
        </authorList>
    </citation>
    <scope>NUCLEOTIDE SEQUENCE [LARGE SCALE GENOMIC DNA]</scope>
    <source>
        <strain>K12 / DH10B</strain>
    </source>
</reference>
<name>NUDL_ECODH</name>
<gene>
    <name evidence="1" type="primary">nudL</name>
    <name type="ordered locus">ECDH10B_1951</name>
</gene>
<proteinExistence type="inferred from homology"/>